<organismHost>
    <name type="scientific">Gallus gallus</name>
    <name type="common">Chicken</name>
    <dbReference type="NCBI Taxonomy" id="9031"/>
</organismHost>
<gene>
    <name type="primary">HN</name>
</gene>
<keyword id="KW-1015">Disulfide bond</keyword>
<keyword id="KW-0325">Glycoprotein</keyword>
<keyword id="KW-0348">Hemagglutinin</keyword>
<keyword id="KW-1032">Host cell membrane</keyword>
<keyword id="KW-1043">Host membrane</keyword>
<keyword id="KW-0945">Host-virus interaction</keyword>
<keyword id="KW-0378">Hydrolase</keyword>
<keyword id="KW-0472">Membrane</keyword>
<keyword id="KW-0735">Signal-anchor</keyword>
<keyword id="KW-0812">Transmembrane</keyword>
<keyword id="KW-1133">Transmembrane helix</keyword>
<keyword id="KW-1161">Viral attachment to host cell</keyword>
<keyword id="KW-0261">Viral envelope protein</keyword>
<keyword id="KW-0946">Virion</keyword>
<keyword id="KW-1160">Virus entry into host cell</keyword>
<accession>P12553</accession>
<organism>
    <name type="scientific">Newcastle disease virus (strain Chicken/United States(TX)/GB/48)</name>
    <name type="common">NDV</name>
    <name type="synonym">Newcastle disease virus (strain Texas g.b./48)</name>
    <dbReference type="NCBI Taxonomy" id="11189"/>
    <lineage>
        <taxon>Viruses</taxon>
        <taxon>Riboviria</taxon>
        <taxon>Orthornavirae</taxon>
        <taxon>Negarnaviricota</taxon>
        <taxon>Haploviricotina</taxon>
        <taxon>Monjiviricetes</taxon>
        <taxon>Mononegavirales</taxon>
        <taxon>Paramyxoviridae</taxon>
        <taxon>Avulavirinae</taxon>
        <taxon>Orthoavulavirus</taxon>
        <taxon>Orthoavulavirus javaense</taxon>
        <taxon>Avian paramyxovirus 1</taxon>
    </lineage>
</organism>
<comment type="function">
    <text evidence="2">Mediates the viral entry into the host cell together with fusion/F protein. Attaches the virus to sialic acid-containing cell receptors and thereby initiates infection. Binding of HN protein to the receptor induces a conformational change that allows the F protein to trigger virion/cell membranes fusion.</text>
</comment>
<comment type="function">
    <text evidence="2">Neuraminidase activity ensures the efficient spread of the virus by dissociating the mature virions from the neuraminic acid containing glycoproteins.</text>
</comment>
<comment type="catalytic activity">
    <reaction evidence="2">
        <text>Hydrolysis of alpha-(2-&gt;3)-, alpha-(2-&gt;6)-, alpha-(2-&gt;8)- glycosidic linkages of terminal sialic acid residues in oligosaccharides, glycoproteins, glycolipids, colominic acid and synthetic substrates.</text>
        <dbReference type="EC" id="3.2.1.18"/>
    </reaction>
</comment>
<comment type="subunit">
    <text evidence="1 2 3">Homotetramer; composed of disulfide-linked homodimers (By similarity). Interacts with F protein trimer (By similarity). Interacts with host CG-1B; this interaction inhibits viral adsorption and replication rather than internalization (By similarity).</text>
</comment>
<comment type="subcellular location">
    <subcellularLocation>
        <location evidence="2">Virion membrane</location>
        <topology evidence="2">Single-pass type II membrane protein</topology>
    </subcellularLocation>
    <subcellularLocation>
        <location evidence="2">Host cell membrane</location>
        <topology evidence="2">Single-pass type II membrane protein</topology>
    </subcellularLocation>
</comment>
<comment type="domain">
    <text evidence="3">The C-terminus (head domain) is involved in binding the cellular receptor.</text>
</comment>
<comment type="similarity">
    <text evidence="5">Belongs to the paramyxoviruses hemagglutinin-neuraminidase family.</text>
</comment>
<sequence>MDRAVSQVALENDEREAKNTWRLIFRIAILLLTVVTLATSVASLVYSMGASTPSDLVGIPTRISRAEEKITSALGSNQDVVDRIYKQVALESPLALLNTETTIMNAITSLSYQINGAANNSGWGAPIHDPDFIGGIGKELIVDDASDVTSFYPSAFQEHHNFIPAPTTGSGCIRIPSFDMSATHYCYTHNIISSGCRDHSHSYQYLALGVLRTSATGRIFFSTLRSINLDDTQNRKSCSVSATPLGCDMLCSKVTETEEEDYNSAVPTLMVHGRLGFDGQYHEKDLDVTTLFEDWVANYPGVGGGSFIDSRVWFSVYGGLKPNSPSDTVQEEKYVIYKRYNDTCPDEQDYQIRMAKSSYKPGRFGGKRIQQAILSIKVSTSLGEDPVLTVPPNTVTLMGAEGRILTVGTSHFLYQRGSSYFSPALLYPMTVSNKTATLHSPYTFNAFTRPGSIPCQASARCPNSCVTGVYTDPYPLIFYRNHTLRGVFGTMLDGEQARLNPASAVFDSTSRSRITRVSSSSTKAAYTTSTCFKVVKTNKTYCLSIAEISNTLFGEFRIVPLLVEILKNDGVREARSG</sequence>
<proteinExistence type="inferred from homology"/>
<feature type="chain" id="PRO_0000142619" description="Hemagglutinin-neuraminidase">
    <location>
        <begin position="1"/>
        <end position="577"/>
    </location>
</feature>
<feature type="topological domain" description="Intravirion" evidence="4">
    <location>
        <begin position="1"/>
        <end position="26"/>
    </location>
</feature>
<feature type="transmembrane region" description="Helical" evidence="4">
    <location>
        <begin position="27"/>
        <end position="47"/>
    </location>
</feature>
<feature type="topological domain" description="Virion surface" evidence="4">
    <location>
        <begin position="48"/>
        <end position="577"/>
    </location>
</feature>
<feature type="region of interest" description="Important for interaction with fusion/F protein" evidence="2">
    <location>
        <begin position="124"/>
        <end position="152"/>
    </location>
</feature>
<feature type="region of interest" description="Involved in neuraminidase activity" evidence="2">
    <location>
        <begin position="234"/>
        <end position="239"/>
    </location>
</feature>
<feature type="glycosylation site" description="N-linked (GlcNAc...) asparagine; by host" evidence="4">
    <location>
        <position position="119"/>
    </location>
</feature>
<feature type="glycosylation site" description="N-linked (GlcNAc...) asparagine; by host" evidence="2">
    <location>
        <position position="341"/>
    </location>
</feature>
<feature type="glycosylation site" description="N-linked (GlcNAc...) asparagine; by host" evidence="2">
    <location>
        <position position="433"/>
    </location>
</feature>
<feature type="glycosylation site" description="N-linked (GlcNAc...) asparagine; by host" evidence="2">
    <location>
        <position position="481"/>
    </location>
</feature>
<feature type="glycosylation site" description="N-linked (GlcNAc...) asparagine; by host" evidence="4">
    <location>
        <position position="538"/>
    </location>
</feature>
<feature type="disulfide bond" evidence="3">
    <location>
        <begin position="172"/>
        <end position="196"/>
    </location>
</feature>
<feature type="disulfide bond" evidence="3">
    <location>
        <begin position="186"/>
        <end position="247"/>
    </location>
</feature>
<feature type="disulfide bond" evidence="3">
    <location>
        <begin position="238"/>
        <end position="251"/>
    </location>
</feature>
<feature type="disulfide bond" evidence="3">
    <location>
        <begin position="344"/>
        <end position="461"/>
    </location>
</feature>
<feature type="disulfide bond" evidence="3">
    <location>
        <begin position="455"/>
        <end position="465"/>
    </location>
</feature>
<feature type="disulfide bond" evidence="3">
    <location>
        <begin position="531"/>
        <end position="542"/>
    </location>
</feature>
<feature type="sequence variant">
    <original>H</original>
    <variation>L</variation>
    <location>
        <position position="160"/>
    </location>
</feature>
<feature type="sequence variant">
    <original>E</original>
    <variation>R</variation>
    <location>
        <position position="332"/>
    </location>
</feature>
<evidence type="ECO:0000250" key="1">
    <source>
        <dbReference type="UniProtKB" id="P04853"/>
    </source>
</evidence>
<evidence type="ECO:0000250" key="2">
    <source>
        <dbReference type="UniProtKB" id="Q91UL0"/>
    </source>
</evidence>
<evidence type="ECO:0000250" key="3">
    <source>
        <dbReference type="UniProtKB" id="Q9WAF5"/>
    </source>
</evidence>
<evidence type="ECO:0000255" key="4"/>
<evidence type="ECO:0000305" key="5"/>
<protein>
    <recommendedName>
        <fullName>Hemagglutinin-neuraminidase</fullName>
        <ecNumber evidence="3">3.2.1.18</ecNumber>
    </recommendedName>
</protein>
<reference key="1">
    <citation type="journal article" date="1988" name="Virology">
        <title>Nucleotide sequence of the envelope protein genes of a highly virulent, neurotropic strain of Newcastle disease virus.</title>
        <authorList>
            <person name="Schaper U.M."/>
            <person name="Fuller F.J."/>
            <person name="Ward M.D.W."/>
            <person name="Mehrotra Y."/>
            <person name="Stone H.O."/>
            <person name="Stripp B.R."/>
            <person name="de Buysscher E.V."/>
        </authorList>
    </citation>
    <scope>NUCLEOTIDE SEQUENCE [GENOMIC RNA]</scope>
</reference>
<reference key="2">
    <citation type="journal article" date="1989" name="Virology">
        <title>Newcastle disease virus evolution. I. Multiple lineages defined by sequence variability of the hemagglutinin-neuraminidase gene.</title>
        <authorList>
            <person name="Sakaguchi T."/>
            <person name="Toyoda T."/>
            <person name="Gotoh B."/>
            <person name="Inocencio N.M."/>
            <person name="Kuma K."/>
            <person name="Miyata T."/>
            <person name="Nagai Y."/>
        </authorList>
    </citation>
    <scope>NUCLEOTIDE SEQUENCE [GENOMIC RNA]</scope>
</reference>
<name>HN_NDVTG</name>
<dbReference type="EC" id="3.2.1.18" evidence="3"/>
<dbReference type="EMBL" id="M21409">
    <property type="protein sequence ID" value="AAA46669.1"/>
    <property type="molecule type" value="Genomic_RNA"/>
</dbReference>
<dbReference type="EMBL" id="M24711">
    <property type="protein sequence ID" value="AAA46661.1"/>
    <property type="molecule type" value="Genomic_RNA"/>
</dbReference>
<dbReference type="SMR" id="P12553"/>
<dbReference type="CAZy" id="GH83">
    <property type="family name" value="Glycoside Hydrolase Family 83"/>
</dbReference>
<dbReference type="GlyCosmos" id="P12553">
    <property type="glycosylation" value="5 sites, No reported glycans"/>
</dbReference>
<dbReference type="GO" id="GO:0020002">
    <property type="term" value="C:host cell plasma membrane"/>
    <property type="evidence" value="ECO:0007669"/>
    <property type="project" value="UniProtKB-SubCell"/>
</dbReference>
<dbReference type="GO" id="GO:0016020">
    <property type="term" value="C:membrane"/>
    <property type="evidence" value="ECO:0007669"/>
    <property type="project" value="UniProtKB-KW"/>
</dbReference>
<dbReference type="GO" id="GO:0019031">
    <property type="term" value="C:viral envelope"/>
    <property type="evidence" value="ECO:0007669"/>
    <property type="project" value="UniProtKB-KW"/>
</dbReference>
<dbReference type="GO" id="GO:0055036">
    <property type="term" value="C:virion membrane"/>
    <property type="evidence" value="ECO:0007669"/>
    <property type="project" value="UniProtKB-SubCell"/>
</dbReference>
<dbReference type="GO" id="GO:0004308">
    <property type="term" value="F:exo-alpha-sialidase activity"/>
    <property type="evidence" value="ECO:0007669"/>
    <property type="project" value="UniProtKB-EC"/>
</dbReference>
<dbReference type="GO" id="GO:0046789">
    <property type="term" value="F:host cell surface receptor binding"/>
    <property type="evidence" value="ECO:0007669"/>
    <property type="project" value="InterPro"/>
</dbReference>
<dbReference type="GO" id="GO:0046718">
    <property type="term" value="P:symbiont entry into host cell"/>
    <property type="evidence" value="ECO:0007669"/>
    <property type="project" value="UniProtKB-KW"/>
</dbReference>
<dbReference type="GO" id="GO:0019062">
    <property type="term" value="P:virion attachment to host cell"/>
    <property type="evidence" value="ECO:0007669"/>
    <property type="project" value="UniProtKB-KW"/>
</dbReference>
<dbReference type="CDD" id="cd15469">
    <property type="entry name" value="HN"/>
    <property type="match status" value="1"/>
</dbReference>
<dbReference type="FunFam" id="2.120.10.10:FF:000004">
    <property type="entry name" value="Hemagglutinin-neuraminidase"/>
    <property type="match status" value="1"/>
</dbReference>
<dbReference type="Gene3D" id="2.120.10.10">
    <property type="match status" value="1"/>
</dbReference>
<dbReference type="InterPro" id="IPR016285">
    <property type="entry name" value="Hemagglutn-neuramid"/>
</dbReference>
<dbReference type="InterPro" id="IPR000665">
    <property type="entry name" value="Hemagglutn/HN"/>
</dbReference>
<dbReference type="InterPro" id="IPR036278">
    <property type="entry name" value="Sialidase_sf"/>
</dbReference>
<dbReference type="Pfam" id="PF00423">
    <property type="entry name" value="HN"/>
    <property type="match status" value="1"/>
</dbReference>
<dbReference type="PIRSF" id="PIRSF001072">
    <property type="entry name" value="Hemagglut-neuramid_paramyxoV"/>
    <property type="match status" value="1"/>
</dbReference>
<dbReference type="SUPFAM" id="SSF50939">
    <property type="entry name" value="Sialidases"/>
    <property type="match status" value="1"/>
</dbReference>